<gene>
    <name evidence="1" type="primary">tig</name>
    <name type="ordered locus">spr0362</name>
</gene>
<accession>Q8DR29</accession>
<protein>
    <recommendedName>
        <fullName evidence="1">Trigger factor</fullName>
        <shortName evidence="1">TF</shortName>
        <ecNumber evidence="1">5.2.1.8</ecNumber>
    </recommendedName>
    <alternativeName>
        <fullName evidence="1">PPIase</fullName>
    </alternativeName>
</protein>
<organism>
    <name type="scientific">Streptococcus pneumoniae (strain ATCC BAA-255 / R6)</name>
    <dbReference type="NCBI Taxonomy" id="171101"/>
    <lineage>
        <taxon>Bacteria</taxon>
        <taxon>Bacillati</taxon>
        <taxon>Bacillota</taxon>
        <taxon>Bacilli</taxon>
        <taxon>Lactobacillales</taxon>
        <taxon>Streptococcaceae</taxon>
        <taxon>Streptococcus</taxon>
    </lineage>
</organism>
<evidence type="ECO:0000255" key="1">
    <source>
        <dbReference type="HAMAP-Rule" id="MF_00303"/>
    </source>
</evidence>
<comment type="function">
    <text evidence="1">Involved in protein export. Acts as a chaperone by maintaining the newly synthesized protein in an open conformation. Functions as a peptidyl-prolyl cis-trans isomerase.</text>
</comment>
<comment type="catalytic activity">
    <reaction evidence="1">
        <text>[protein]-peptidylproline (omega=180) = [protein]-peptidylproline (omega=0)</text>
        <dbReference type="Rhea" id="RHEA:16237"/>
        <dbReference type="Rhea" id="RHEA-COMP:10747"/>
        <dbReference type="Rhea" id="RHEA-COMP:10748"/>
        <dbReference type="ChEBI" id="CHEBI:83833"/>
        <dbReference type="ChEBI" id="CHEBI:83834"/>
        <dbReference type="EC" id="5.2.1.8"/>
    </reaction>
</comment>
<comment type="subcellular location">
    <subcellularLocation>
        <location>Cytoplasm</location>
    </subcellularLocation>
    <text evidence="1">About half TF is bound to the ribosome near the polypeptide exit tunnel while the other half is free in the cytoplasm.</text>
</comment>
<comment type="domain">
    <text evidence="1">Consists of 3 domains; the N-terminus binds the ribosome, the middle domain has PPIase activity, while the C-terminus has intrinsic chaperone activity on its own.</text>
</comment>
<comment type="similarity">
    <text evidence="1">Belongs to the FKBP-type PPIase family. Tig subfamily.</text>
</comment>
<sequence>MSVSFENKETNRGVLTFTISQDQIKPELDRVFKSVKKSLNVPGFRKGHLPRPIFDQKFGEEALYQDAMNALLPNAYEAAVKEAGLEVVAQPKIDVTSMEKGQDWVITAEVVTKPEVKLGDYKNLEVSVDVEKEVTDADVEERIERERNNLAELVIKEAAAENGDTVVIDFVGSIDGVEFDGGKGENFSLGLGSGQFIPGFEDQLVGHSAGETVDVIVTFPEDYQAEDLAGKEAKFVTTIHEVKAKEVPALDDELAKDIDEEVETLADLKEKYRKELAAAKEETYKDAVEGAAIDTAVENAEIVELPEEMIHEEVHRSVNEFLGNLQRQGINPDMYFQITGTTQEDLHNQYQAEAESRTKTNLVIEAVAKAEGFDASEEEIQKEVEQLAADYNMEVAQVQNLLSADMLKHDITIKKAVELITSTATVK</sequence>
<reference key="1">
    <citation type="journal article" date="2001" name="J. Bacteriol.">
        <title>Genome of the bacterium Streptococcus pneumoniae strain R6.</title>
        <authorList>
            <person name="Hoskins J."/>
            <person name="Alborn W.E. Jr."/>
            <person name="Arnold J."/>
            <person name="Blaszczak L.C."/>
            <person name="Burgett S."/>
            <person name="DeHoff B.S."/>
            <person name="Estrem S.T."/>
            <person name="Fritz L."/>
            <person name="Fu D.-J."/>
            <person name="Fuller W."/>
            <person name="Geringer C."/>
            <person name="Gilmour R."/>
            <person name="Glass J.S."/>
            <person name="Khoja H."/>
            <person name="Kraft A.R."/>
            <person name="Lagace R.E."/>
            <person name="LeBlanc D.J."/>
            <person name="Lee L.N."/>
            <person name="Lefkowitz E.J."/>
            <person name="Lu J."/>
            <person name="Matsushima P."/>
            <person name="McAhren S.M."/>
            <person name="McHenney M."/>
            <person name="McLeaster K."/>
            <person name="Mundy C.W."/>
            <person name="Nicas T.I."/>
            <person name="Norris F.H."/>
            <person name="O'Gara M."/>
            <person name="Peery R.B."/>
            <person name="Robertson G.T."/>
            <person name="Rockey P."/>
            <person name="Sun P.-M."/>
            <person name="Winkler M.E."/>
            <person name="Yang Y."/>
            <person name="Young-Bellido M."/>
            <person name="Zhao G."/>
            <person name="Zook C.A."/>
            <person name="Baltz R.H."/>
            <person name="Jaskunas S.R."/>
            <person name="Rosteck P.R. Jr."/>
            <person name="Skatrud P.L."/>
            <person name="Glass J.I."/>
        </authorList>
    </citation>
    <scope>NUCLEOTIDE SEQUENCE [LARGE SCALE GENOMIC DNA]</scope>
    <source>
        <strain>ATCC BAA-255 / R6</strain>
    </source>
</reference>
<feature type="chain" id="PRO_0000179439" description="Trigger factor">
    <location>
        <begin position="1"/>
        <end position="427"/>
    </location>
</feature>
<feature type="domain" description="PPIase FKBP-type" evidence="1">
    <location>
        <begin position="163"/>
        <end position="248"/>
    </location>
</feature>
<proteinExistence type="inferred from homology"/>
<keyword id="KW-0131">Cell cycle</keyword>
<keyword id="KW-0132">Cell division</keyword>
<keyword id="KW-0143">Chaperone</keyword>
<keyword id="KW-0963">Cytoplasm</keyword>
<keyword id="KW-0413">Isomerase</keyword>
<keyword id="KW-1185">Reference proteome</keyword>
<keyword id="KW-0697">Rotamase</keyword>
<name>TIG_STRR6</name>
<dbReference type="EC" id="5.2.1.8" evidence="1"/>
<dbReference type="EMBL" id="AE007317">
    <property type="protein sequence ID" value="AAK99166.1"/>
    <property type="molecule type" value="Genomic_DNA"/>
</dbReference>
<dbReference type="PIR" id="B97917">
    <property type="entry name" value="B97917"/>
</dbReference>
<dbReference type="RefSeq" id="NP_357956.1">
    <property type="nucleotide sequence ID" value="NC_003098.1"/>
</dbReference>
<dbReference type="RefSeq" id="WP_000116477.1">
    <property type="nucleotide sequence ID" value="NC_003098.1"/>
</dbReference>
<dbReference type="SMR" id="Q8DR29"/>
<dbReference type="STRING" id="171101.spr0362"/>
<dbReference type="KEGG" id="spr:spr0362"/>
<dbReference type="PATRIC" id="fig|171101.6.peg.401"/>
<dbReference type="eggNOG" id="COG0544">
    <property type="taxonomic scope" value="Bacteria"/>
</dbReference>
<dbReference type="HOGENOM" id="CLU_033058_3_2_9"/>
<dbReference type="Proteomes" id="UP000000586">
    <property type="component" value="Chromosome"/>
</dbReference>
<dbReference type="GO" id="GO:0005737">
    <property type="term" value="C:cytoplasm"/>
    <property type="evidence" value="ECO:0007669"/>
    <property type="project" value="UniProtKB-SubCell"/>
</dbReference>
<dbReference type="GO" id="GO:0003755">
    <property type="term" value="F:peptidyl-prolyl cis-trans isomerase activity"/>
    <property type="evidence" value="ECO:0000318"/>
    <property type="project" value="GO_Central"/>
</dbReference>
<dbReference type="GO" id="GO:0044183">
    <property type="term" value="F:protein folding chaperone"/>
    <property type="evidence" value="ECO:0000318"/>
    <property type="project" value="GO_Central"/>
</dbReference>
<dbReference type="GO" id="GO:0043022">
    <property type="term" value="F:ribosome binding"/>
    <property type="evidence" value="ECO:0000318"/>
    <property type="project" value="GO_Central"/>
</dbReference>
<dbReference type="GO" id="GO:0051083">
    <property type="term" value="P:'de novo' cotranslational protein folding"/>
    <property type="evidence" value="ECO:0000318"/>
    <property type="project" value="GO_Central"/>
</dbReference>
<dbReference type="GO" id="GO:0051301">
    <property type="term" value="P:cell division"/>
    <property type="evidence" value="ECO:0007669"/>
    <property type="project" value="UniProtKB-KW"/>
</dbReference>
<dbReference type="GO" id="GO:0061077">
    <property type="term" value="P:chaperone-mediated protein folding"/>
    <property type="evidence" value="ECO:0000318"/>
    <property type="project" value="GO_Central"/>
</dbReference>
<dbReference type="GO" id="GO:0015031">
    <property type="term" value="P:protein transport"/>
    <property type="evidence" value="ECO:0007669"/>
    <property type="project" value="UniProtKB-UniRule"/>
</dbReference>
<dbReference type="GO" id="GO:0043335">
    <property type="term" value="P:protein unfolding"/>
    <property type="evidence" value="ECO:0000318"/>
    <property type="project" value="GO_Central"/>
</dbReference>
<dbReference type="FunFam" id="3.10.50.40:FF:000001">
    <property type="entry name" value="Trigger factor"/>
    <property type="match status" value="1"/>
</dbReference>
<dbReference type="Gene3D" id="3.10.50.40">
    <property type="match status" value="1"/>
</dbReference>
<dbReference type="Gene3D" id="3.30.70.1050">
    <property type="entry name" value="Trigger factor ribosome-binding domain"/>
    <property type="match status" value="1"/>
</dbReference>
<dbReference type="Gene3D" id="1.10.3120.10">
    <property type="entry name" value="Trigger factor, C-terminal domain"/>
    <property type="match status" value="1"/>
</dbReference>
<dbReference type="HAMAP" id="MF_00303">
    <property type="entry name" value="Trigger_factor_Tig"/>
    <property type="match status" value="1"/>
</dbReference>
<dbReference type="InterPro" id="IPR046357">
    <property type="entry name" value="PPIase_dom_sf"/>
</dbReference>
<dbReference type="InterPro" id="IPR001179">
    <property type="entry name" value="PPIase_FKBP_dom"/>
</dbReference>
<dbReference type="InterPro" id="IPR005215">
    <property type="entry name" value="Trig_fac"/>
</dbReference>
<dbReference type="InterPro" id="IPR008880">
    <property type="entry name" value="Trigger_fac_C"/>
</dbReference>
<dbReference type="InterPro" id="IPR037041">
    <property type="entry name" value="Trigger_fac_C_sf"/>
</dbReference>
<dbReference type="InterPro" id="IPR008881">
    <property type="entry name" value="Trigger_fac_ribosome-bd_bac"/>
</dbReference>
<dbReference type="InterPro" id="IPR036611">
    <property type="entry name" value="Trigger_fac_ribosome-bd_sf"/>
</dbReference>
<dbReference type="InterPro" id="IPR027304">
    <property type="entry name" value="Trigger_fact/SurA_dom_sf"/>
</dbReference>
<dbReference type="NCBIfam" id="TIGR00115">
    <property type="entry name" value="tig"/>
    <property type="match status" value="1"/>
</dbReference>
<dbReference type="PANTHER" id="PTHR30560">
    <property type="entry name" value="TRIGGER FACTOR CHAPERONE AND PEPTIDYL-PROLYL CIS/TRANS ISOMERASE"/>
    <property type="match status" value="1"/>
</dbReference>
<dbReference type="PANTHER" id="PTHR30560:SF3">
    <property type="entry name" value="TRIGGER FACTOR-LIKE PROTEIN TIG, CHLOROPLASTIC"/>
    <property type="match status" value="1"/>
</dbReference>
<dbReference type="Pfam" id="PF00254">
    <property type="entry name" value="FKBP_C"/>
    <property type="match status" value="1"/>
</dbReference>
<dbReference type="Pfam" id="PF05698">
    <property type="entry name" value="Trigger_C"/>
    <property type="match status" value="1"/>
</dbReference>
<dbReference type="Pfam" id="PF05697">
    <property type="entry name" value="Trigger_N"/>
    <property type="match status" value="1"/>
</dbReference>
<dbReference type="PIRSF" id="PIRSF003095">
    <property type="entry name" value="Trigger_factor"/>
    <property type="match status" value="1"/>
</dbReference>
<dbReference type="SUPFAM" id="SSF54534">
    <property type="entry name" value="FKBP-like"/>
    <property type="match status" value="1"/>
</dbReference>
<dbReference type="SUPFAM" id="SSF109998">
    <property type="entry name" value="Triger factor/SurA peptide-binding domain-like"/>
    <property type="match status" value="1"/>
</dbReference>
<dbReference type="SUPFAM" id="SSF102735">
    <property type="entry name" value="Trigger factor ribosome-binding domain"/>
    <property type="match status" value="1"/>
</dbReference>
<dbReference type="PROSITE" id="PS50059">
    <property type="entry name" value="FKBP_PPIASE"/>
    <property type="match status" value="1"/>
</dbReference>